<name>HOX13_ORYSJ</name>
<keyword id="KW-0238">DNA-binding</keyword>
<keyword id="KW-0371">Homeobox</keyword>
<keyword id="KW-0539">Nucleus</keyword>
<keyword id="KW-1185">Reference proteome</keyword>
<keyword id="KW-0804">Transcription</keyword>
<keyword id="KW-0805">Transcription regulation</keyword>
<reference key="1">
    <citation type="journal article" date="2005" name="Genome Res.">
        <title>Sequence, annotation, and analysis of synteny between rice chromosome 3 and diverged grass species.</title>
        <authorList>
            <consortium name="The rice chromosome 3 sequencing consortium"/>
            <person name="Buell C.R."/>
            <person name="Yuan Q."/>
            <person name="Ouyang S."/>
            <person name="Liu J."/>
            <person name="Zhu W."/>
            <person name="Wang A."/>
            <person name="Maiti R."/>
            <person name="Haas B."/>
            <person name="Wortman J."/>
            <person name="Pertea M."/>
            <person name="Jones K.M."/>
            <person name="Kim M."/>
            <person name="Overton L."/>
            <person name="Tsitrin T."/>
            <person name="Fadrosh D."/>
            <person name="Bera J."/>
            <person name="Weaver B."/>
            <person name="Jin S."/>
            <person name="Johri S."/>
            <person name="Reardon M."/>
            <person name="Webb K."/>
            <person name="Hill J."/>
            <person name="Moffat K."/>
            <person name="Tallon L."/>
            <person name="Van Aken S."/>
            <person name="Lewis M."/>
            <person name="Utterback T."/>
            <person name="Feldblyum T."/>
            <person name="Zismann V."/>
            <person name="Iobst S."/>
            <person name="Hsiao J."/>
            <person name="de Vazeille A.R."/>
            <person name="Salzberg S.L."/>
            <person name="White O."/>
            <person name="Fraser C.M."/>
            <person name="Yu Y."/>
            <person name="Kim H."/>
            <person name="Rambo T."/>
            <person name="Currie J."/>
            <person name="Collura K."/>
            <person name="Kernodle-Thompson S."/>
            <person name="Wei F."/>
            <person name="Kudrna K."/>
            <person name="Ammiraju J.S.S."/>
            <person name="Luo M."/>
            <person name="Goicoechea J.L."/>
            <person name="Wing R.A."/>
            <person name="Henry D."/>
            <person name="Oates R."/>
            <person name="Palmer M."/>
            <person name="Pries G."/>
            <person name="Saski C."/>
            <person name="Simmons J."/>
            <person name="Soderlund C."/>
            <person name="Nelson W."/>
            <person name="de la Bastide M."/>
            <person name="Spiegel L."/>
            <person name="Nascimento L."/>
            <person name="Huang E."/>
            <person name="Preston R."/>
            <person name="Zutavern T."/>
            <person name="Palmer L."/>
            <person name="O'Shaughnessy A."/>
            <person name="Dike S."/>
            <person name="McCombie W.R."/>
            <person name="Minx P."/>
            <person name="Cordum H."/>
            <person name="Wilson R."/>
            <person name="Jin W."/>
            <person name="Lee H.R."/>
            <person name="Jiang J."/>
            <person name="Jackson S."/>
        </authorList>
    </citation>
    <scope>NUCLEOTIDE SEQUENCE [LARGE SCALE GENOMIC DNA]</scope>
    <source>
        <strain>cv. Nipponbare</strain>
    </source>
</reference>
<reference key="2">
    <citation type="journal article" date="2005" name="Nature">
        <title>The map-based sequence of the rice genome.</title>
        <authorList>
            <consortium name="International rice genome sequencing project (IRGSP)"/>
        </authorList>
    </citation>
    <scope>NUCLEOTIDE SEQUENCE [LARGE SCALE GENOMIC DNA]</scope>
    <source>
        <strain>cv. Nipponbare</strain>
    </source>
</reference>
<reference key="3">
    <citation type="journal article" date="2008" name="Nucleic Acids Res.">
        <title>The rice annotation project database (RAP-DB): 2008 update.</title>
        <authorList>
            <consortium name="The rice annotation project (RAP)"/>
        </authorList>
    </citation>
    <scope>GENOME REANNOTATION</scope>
    <source>
        <strain>cv. Nipponbare</strain>
    </source>
</reference>
<reference key="4">
    <citation type="journal article" date="2013" name="Rice">
        <title>Improvement of the Oryza sativa Nipponbare reference genome using next generation sequence and optical map data.</title>
        <authorList>
            <person name="Kawahara Y."/>
            <person name="de la Bastide M."/>
            <person name="Hamilton J.P."/>
            <person name="Kanamori H."/>
            <person name="McCombie W.R."/>
            <person name="Ouyang S."/>
            <person name="Schwartz D.C."/>
            <person name="Tanaka T."/>
            <person name="Wu J."/>
            <person name="Zhou S."/>
            <person name="Childs K.L."/>
            <person name="Davidson R.M."/>
            <person name="Lin H."/>
            <person name="Quesada-Ocampo L."/>
            <person name="Vaillancourt B."/>
            <person name="Sakai H."/>
            <person name="Lee S.S."/>
            <person name="Kim J."/>
            <person name="Numa H."/>
            <person name="Itoh T."/>
            <person name="Buell C.R."/>
            <person name="Matsumoto T."/>
        </authorList>
    </citation>
    <scope>GENOME REANNOTATION</scope>
    <source>
        <strain>cv. Nipponbare</strain>
    </source>
</reference>
<reference key="5">
    <citation type="journal article" date="2003" name="Science">
        <title>Collection, mapping, and annotation of over 28,000 cDNA clones from japonica rice.</title>
        <authorList>
            <consortium name="The rice full-length cDNA consortium"/>
        </authorList>
    </citation>
    <scope>NUCLEOTIDE SEQUENCE [LARGE SCALE MRNA]</scope>
    <source>
        <strain>cv. Nipponbare</strain>
    </source>
</reference>
<reference key="6">
    <citation type="journal article" date="2008" name="Plant Mol. Biol.">
        <title>A genome-wide survey of HD-Zip genes in rice and analysis of drought-responsive family members.</title>
        <authorList>
            <person name="Agalou A."/>
            <person name="Purwantomo S."/>
            <person name="Oevernaes E."/>
            <person name="Johannesson H."/>
            <person name="Zhu X."/>
            <person name="Estiati A."/>
            <person name="de Kam R.J."/>
            <person name="Engstroem P."/>
            <person name="Slamet-Loedin I.H."/>
            <person name="Zhu Z."/>
            <person name="Wang M."/>
            <person name="Xiong L."/>
            <person name="Meijer A.H."/>
            <person name="Ouwerkerk P.B.F."/>
        </authorList>
    </citation>
    <scope>NUCLEOTIDE SEQUENCE [MRNA] OF 55-194</scope>
    <scope>TISSUE SPECIFICITY</scope>
    <scope>GENE FAMILY</scope>
    <scope>NOMENCLATURE</scope>
    <source>
        <strain>cv. Nipponbare</strain>
    </source>
</reference>
<gene>
    <name type="primary">HOX13</name>
    <name type="ordered locus">Os03g0188900</name>
    <name type="ordered locus">LOC_Os03g08960</name>
    <name type="ORF">OJ1217B09.11</name>
</gene>
<accession>Q10QP3</accession>
<accession>B7ERV3</accession>
<accession>Q6Q7E0</accession>
<accession>Q8H7N5</accession>
<feature type="chain" id="PRO_0000331699" description="Homeobox-leucine zipper protein HOX13">
    <location>
        <begin position="1"/>
        <end position="311"/>
    </location>
</feature>
<feature type="DNA-binding region" description="Homeobox" evidence="2">
    <location>
        <begin position="69"/>
        <end position="128"/>
    </location>
</feature>
<feature type="region of interest" description="Disordered" evidence="3">
    <location>
        <begin position="1"/>
        <end position="74"/>
    </location>
</feature>
<feature type="region of interest" description="Leucine-zipper">
    <location>
        <begin position="127"/>
        <end position="171"/>
    </location>
</feature>
<feature type="compositionally biased region" description="Acidic residues" evidence="3">
    <location>
        <begin position="35"/>
        <end position="54"/>
    </location>
</feature>
<proteinExistence type="evidence at transcript level"/>
<evidence type="ECO:0000250" key="1"/>
<evidence type="ECO:0000255" key="2">
    <source>
        <dbReference type="PROSITE-ProRule" id="PRU00108"/>
    </source>
</evidence>
<evidence type="ECO:0000256" key="3">
    <source>
        <dbReference type="SAM" id="MobiDB-lite"/>
    </source>
</evidence>
<evidence type="ECO:0000269" key="4">
    <source>
    </source>
</evidence>
<evidence type="ECO:0000305" key="5"/>
<comment type="function">
    <text evidence="1">Probable transcription factor.</text>
</comment>
<comment type="subcellular location">
    <subcellularLocation>
        <location evidence="5">Nucleus</location>
    </subcellularLocation>
</comment>
<comment type="tissue specificity">
    <text evidence="4">Expressed in seedlings, roots, stems, leaf sheaths and blades and panicles.</text>
</comment>
<comment type="similarity">
    <text evidence="5">Belongs to the HD-ZIP homeobox family. Class I subfamily.</text>
</comment>
<comment type="sequence caution" evidence="5">
    <conflict type="erroneous gene model prediction">
        <sequence resource="EMBL-CDS" id="AAN64145"/>
    </conflict>
</comment>
<sequence>MKRPTSSSRKSKKQGEDLAFSEEGSLPAVTMEQKDEAEMEEVDEEEEEEVDEDMAGGHAAQSPSPSCGLGEKKRRLALEQVRALERSFDTDNKLDPDRKARIARDLGLQPRQVAVWFQNRRARWKTKQLERDFAALRARHDALRADCDALRRDKDALAAEIRELREKLPTKPADTAASVKVEAGNDAAAGAAAATVCKDGSSDDSDSSVVFNDEASPYSGAAFIGFGPSFLVDDASAATVGCSSSLPALESKWHGPYSDDSCKGGVYGFTEEWLAACSGEMAGNDAAGFFSDEHASNLNFGWCASGNEGWE</sequence>
<protein>
    <recommendedName>
        <fullName>Homeobox-leucine zipper protein HOX13</fullName>
    </recommendedName>
    <alternativeName>
        <fullName>HD-ZIP protein HOX13</fullName>
    </alternativeName>
    <alternativeName>
        <fullName>Homeodomain transcription factor HOX13</fullName>
    </alternativeName>
    <alternativeName>
        <fullName>OsHox13</fullName>
    </alternativeName>
</protein>
<dbReference type="EMBL" id="AC121489">
    <property type="protein sequence ID" value="AAN64145.1"/>
    <property type="status" value="ALT_SEQ"/>
    <property type="molecule type" value="Genomic_DNA"/>
</dbReference>
<dbReference type="EMBL" id="DP000009">
    <property type="protein sequence ID" value="ABF94384.1"/>
    <property type="molecule type" value="Genomic_DNA"/>
</dbReference>
<dbReference type="EMBL" id="AP008209">
    <property type="protein sequence ID" value="BAF11133.1"/>
    <property type="molecule type" value="Genomic_DNA"/>
</dbReference>
<dbReference type="EMBL" id="AP014959">
    <property type="protein sequence ID" value="BAS82700.1"/>
    <property type="molecule type" value="Genomic_DNA"/>
</dbReference>
<dbReference type="EMBL" id="AK101522">
    <property type="protein sequence ID" value="BAG95100.1"/>
    <property type="molecule type" value="mRNA"/>
</dbReference>
<dbReference type="EMBL" id="AK105644">
    <property type="protein sequence ID" value="BAG97324.1"/>
    <property type="molecule type" value="mRNA"/>
</dbReference>
<dbReference type="EMBL" id="AY554032">
    <property type="protein sequence ID" value="AAS83420.1"/>
    <property type="molecule type" value="mRNA"/>
</dbReference>
<dbReference type="RefSeq" id="XP_015628283.1">
    <property type="nucleotide sequence ID" value="XM_015772797.1"/>
</dbReference>
<dbReference type="RefSeq" id="XP_015628284.1">
    <property type="nucleotide sequence ID" value="XM_015772798.1"/>
</dbReference>
<dbReference type="SMR" id="Q10QP3"/>
<dbReference type="FunCoup" id="Q10QP3">
    <property type="interactions" value="46"/>
</dbReference>
<dbReference type="STRING" id="39947.Q10QP3"/>
<dbReference type="PaxDb" id="39947-Q10QP3"/>
<dbReference type="EnsemblPlants" id="Os03t0188900-01">
    <property type="protein sequence ID" value="Os03t0188900-01"/>
    <property type="gene ID" value="Os03g0188900"/>
</dbReference>
<dbReference type="Gramene" id="Os03t0188900-01">
    <property type="protein sequence ID" value="Os03t0188900-01"/>
    <property type="gene ID" value="Os03g0188900"/>
</dbReference>
<dbReference type="KEGG" id="dosa:Os03g0188900"/>
<dbReference type="eggNOG" id="KOG0483">
    <property type="taxonomic scope" value="Eukaryota"/>
</dbReference>
<dbReference type="InParanoid" id="Q10QP3"/>
<dbReference type="OMA" id="TMEQQDE"/>
<dbReference type="OrthoDB" id="1867783at2759"/>
<dbReference type="Proteomes" id="UP000000763">
    <property type="component" value="Chromosome 3"/>
</dbReference>
<dbReference type="Proteomes" id="UP000059680">
    <property type="component" value="Chromosome 3"/>
</dbReference>
<dbReference type="ExpressionAtlas" id="Q10QP3">
    <property type="expression patterns" value="baseline and differential"/>
</dbReference>
<dbReference type="GO" id="GO:0005634">
    <property type="term" value="C:nucleus"/>
    <property type="evidence" value="ECO:0000318"/>
    <property type="project" value="GO_Central"/>
</dbReference>
<dbReference type="GO" id="GO:0000981">
    <property type="term" value="F:DNA-binding transcription factor activity, RNA polymerase II-specific"/>
    <property type="evidence" value="ECO:0007669"/>
    <property type="project" value="InterPro"/>
</dbReference>
<dbReference type="GO" id="GO:0043565">
    <property type="term" value="F:sequence-specific DNA binding"/>
    <property type="evidence" value="ECO:0000318"/>
    <property type="project" value="GO_Central"/>
</dbReference>
<dbReference type="GO" id="GO:0045893">
    <property type="term" value="P:positive regulation of DNA-templated transcription"/>
    <property type="evidence" value="ECO:0000318"/>
    <property type="project" value="GO_Central"/>
</dbReference>
<dbReference type="CDD" id="cd00086">
    <property type="entry name" value="homeodomain"/>
    <property type="match status" value="1"/>
</dbReference>
<dbReference type="FunFam" id="1.10.10.60:FF:000242">
    <property type="entry name" value="Homeobox-leucine zipper protein HOX13"/>
    <property type="match status" value="1"/>
</dbReference>
<dbReference type="Gene3D" id="1.10.10.60">
    <property type="entry name" value="Homeodomain-like"/>
    <property type="match status" value="1"/>
</dbReference>
<dbReference type="InterPro" id="IPR001356">
    <property type="entry name" value="HD"/>
</dbReference>
<dbReference type="InterPro" id="IPR045224">
    <property type="entry name" value="HDZip_class_I_plant"/>
</dbReference>
<dbReference type="InterPro" id="IPR017970">
    <property type="entry name" value="Homeobox_CS"/>
</dbReference>
<dbReference type="InterPro" id="IPR009057">
    <property type="entry name" value="Homeodomain-like_sf"/>
</dbReference>
<dbReference type="InterPro" id="IPR000047">
    <property type="entry name" value="HTH_motif"/>
</dbReference>
<dbReference type="InterPro" id="IPR003106">
    <property type="entry name" value="Leu_zip_homeo"/>
</dbReference>
<dbReference type="PANTHER" id="PTHR24326">
    <property type="entry name" value="HOMEOBOX-LEUCINE ZIPPER PROTEIN"/>
    <property type="match status" value="1"/>
</dbReference>
<dbReference type="PANTHER" id="PTHR24326:SF300">
    <property type="entry name" value="HOMEOBOX-LEUCINE ZIPPER PROTEIN HOX13"/>
    <property type="match status" value="1"/>
</dbReference>
<dbReference type="Pfam" id="PF02183">
    <property type="entry name" value="HALZ"/>
    <property type="match status" value="1"/>
</dbReference>
<dbReference type="Pfam" id="PF00046">
    <property type="entry name" value="Homeodomain"/>
    <property type="match status" value="1"/>
</dbReference>
<dbReference type="PRINTS" id="PR00031">
    <property type="entry name" value="HTHREPRESSR"/>
</dbReference>
<dbReference type="SMART" id="SM00389">
    <property type="entry name" value="HOX"/>
    <property type="match status" value="1"/>
</dbReference>
<dbReference type="SUPFAM" id="SSF46689">
    <property type="entry name" value="Homeodomain-like"/>
    <property type="match status" value="1"/>
</dbReference>
<dbReference type="PROSITE" id="PS00027">
    <property type="entry name" value="HOMEOBOX_1"/>
    <property type="match status" value="1"/>
</dbReference>
<dbReference type="PROSITE" id="PS50071">
    <property type="entry name" value="HOMEOBOX_2"/>
    <property type="match status" value="1"/>
</dbReference>
<organism>
    <name type="scientific">Oryza sativa subsp. japonica</name>
    <name type="common">Rice</name>
    <dbReference type="NCBI Taxonomy" id="39947"/>
    <lineage>
        <taxon>Eukaryota</taxon>
        <taxon>Viridiplantae</taxon>
        <taxon>Streptophyta</taxon>
        <taxon>Embryophyta</taxon>
        <taxon>Tracheophyta</taxon>
        <taxon>Spermatophyta</taxon>
        <taxon>Magnoliopsida</taxon>
        <taxon>Liliopsida</taxon>
        <taxon>Poales</taxon>
        <taxon>Poaceae</taxon>
        <taxon>BOP clade</taxon>
        <taxon>Oryzoideae</taxon>
        <taxon>Oryzeae</taxon>
        <taxon>Oryzinae</taxon>
        <taxon>Oryza</taxon>
        <taxon>Oryza sativa</taxon>
    </lineage>
</organism>